<dbReference type="EMBL" id="CP000038">
    <property type="protein sequence ID" value="AAZ89206.1"/>
    <property type="status" value="ALT_INIT"/>
    <property type="molecule type" value="Genomic_DNA"/>
</dbReference>
<dbReference type="RefSeq" id="WP_001307333.1">
    <property type="nucleotide sequence ID" value="NC_007384.1"/>
</dbReference>
<dbReference type="SMR" id="Q3YZ56"/>
<dbReference type="KEGG" id="ssn:SSON_2578"/>
<dbReference type="HOGENOM" id="CLU_072265_1_1_6"/>
<dbReference type="Proteomes" id="UP000002529">
    <property type="component" value="Chromosome"/>
</dbReference>
<dbReference type="GO" id="GO:0006270">
    <property type="term" value="P:DNA replication initiation"/>
    <property type="evidence" value="ECO:0007669"/>
    <property type="project" value="TreeGrafter"/>
</dbReference>
<dbReference type="GO" id="GO:0032297">
    <property type="term" value="P:negative regulation of DNA-templated DNA replication initiation"/>
    <property type="evidence" value="ECO:0007669"/>
    <property type="project" value="InterPro"/>
</dbReference>
<dbReference type="FunFam" id="1.10.8.60:FF:000024">
    <property type="entry name" value="DnaA regulatory inactivator Hda"/>
    <property type="match status" value="1"/>
</dbReference>
<dbReference type="FunFam" id="3.40.50.300:FF:000452">
    <property type="entry name" value="DnaA regulatory inactivator Hda"/>
    <property type="match status" value="1"/>
</dbReference>
<dbReference type="Gene3D" id="1.10.8.60">
    <property type="match status" value="1"/>
</dbReference>
<dbReference type="Gene3D" id="3.40.50.300">
    <property type="entry name" value="P-loop containing nucleotide triphosphate hydrolases"/>
    <property type="match status" value="1"/>
</dbReference>
<dbReference type="HAMAP" id="MF_01158">
    <property type="entry name" value="Hda"/>
    <property type="match status" value="1"/>
</dbReference>
<dbReference type="InterPro" id="IPR020591">
    <property type="entry name" value="Chromosome_initiator_DnaA-like"/>
</dbReference>
<dbReference type="InterPro" id="IPR013317">
    <property type="entry name" value="DnaA_dom"/>
</dbReference>
<dbReference type="InterPro" id="IPR017788">
    <property type="entry name" value="Hda"/>
</dbReference>
<dbReference type="InterPro" id="IPR022864">
    <property type="entry name" value="Hda_Enterobact"/>
</dbReference>
<dbReference type="InterPro" id="IPR055199">
    <property type="entry name" value="Hda_lid"/>
</dbReference>
<dbReference type="InterPro" id="IPR027417">
    <property type="entry name" value="P-loop_NTPase"/>
</dbReference>
<dbReference type="NCBIfam" id="TIGR03420">
    <property type="entry name" value="DnaA_homol_Hda"/>
    <property type="match status" value="1"/>
</dbReference>
<dbReference type="NCBIfam" id="NF005982">
    <property type="entry name" value="PRK08084.1"/>
    <property type="match status" value="1"/>
</dbReference>
<dbReference type="PANTHER" id="PTHR30050">
    <property type="entry name" value="CHROMOSOMAL REPLICATION INITIATOR PROTEIN DNAA"/>
    <property type="match status" value="1"/>
</dbReference>
<dbReference type="PANTHER" id="PTHR30050:SF5">
    <property type="entry name" value="DNAA REGULATORY INACTIVATOR HDA"/>
    <property type="match status" value="1"/>
</dbReference>
<dbReference type="Pfam" id="PF00308">
    <property type="entry name" value="Bac_DnaA"/>
    <property type="match status" value="1"/>
</dbReference>
<dbReference type="Pfam" id="PF22688">
    <property type="entry name" value="Hda_lid"/>
    <property type="match status" value="1"/>
</dbReference>
<dbReference type="PRINTS" id="PR00051">
    <property type="entry name" value="DNAA"/>
</dbReference>
<dbReference type="SUPFAM" id="SSF52540">
    <property type="entry name" value="P-loop containing nucleoside triphosphate hydrolases"/>
    <property type="match status" value="1"/>
</dbReference>
<evidence type="ECO:0000250" key="1"/>
<evidence type="ECO:0000255" key="2">
    <source>
        <dbReference type="HAMAP-Rule" id="MF_01158"/>
    </source>
</evidence>
<evidence type="ECO:0000305" key="3"/>
<accession>Q3YZ56</accession>
<sequence length="233" mass="26633">MNTPAQLSLPLYLPDDETFASFWPGDNSSLLAALQNVLRQEHSGYIYLWAREGAGRSHLLHAACAELSQRGDAVGYVPLDKRTWFVPEVLDGMEHLSLVCIDNIECIAGDELWEMAIFDLYNRILESGKTRLLITGDRPPRQLNLGLPDLASRLDWGQIYKLQPLSDEDKLQALQLRARLRGFELPEDVGRFLLKRLDREMRTLFMTLDQLDRASITAQRKLTIPFVKEILKL</sequence>
<keyword id="KW-0235">DNA replication</keyword>
<keyword id="KW-0236">DNA replication inhibitor</keyword>
<keyword id="KW-1185">Reference proteome</keyword>
<proteinExistence type="inferred from homology"/>
<protein>
    <recommendedName>
        <fullName evidence="2">DnaA regulatory inactivator Hda</fullName>
    </recommendedName>
</protein>
<organism>
    <name type="scientific">Shigella sonnei (strain Ss046)</name>
    <dbReference type="NCBI Taxonomy" id="300269"/>
    <lineage>
        <taxon>Bacteria</taxon>
        <taxon>Pseudomonadati</taxon>
        <taxon>Pseudomonadota</taxon>
        <taxon>Gammaproteobacteria</taxon>
        <taxon>Enterobacterales</taxon>
        <taxon>Enterobacteriaceae</taxon>
        <taxon>Shigella</taxon>
    </lineage>
</organism>
<name>HDA_SHISS</name>
<comment type="function">
    <text evidence="1">Mediates the interaction of DNA replication initiator protein DnaA with DNA polymerase subunit beta sliding clamp (dnaN). Stimulates hydrolysis of ATP-DnaA to ADP-DnaA, rendering DnaA inactive for reinitiation, a process called regulatory inhibition of DnaA or RIDA (By similarity).</text>
</comment>
<comment type="subunit">
    <text evidence="2">The active form seems to be an ADP-bound monomer. Forms the RIDA complex (regulatory inactivation of DnaA) of ATP-DnaA, ADP-Hda and the DNA-loaded beta sliding clamp (dnaN).</text>
</comment>
<comment type="similarity">
    <text evidence="2">Belongs to the DnaA family. HdA subfamily.</text>
</comment>
<comment type="sequence caution" evidence="3">
    <conflict type="erroneous initiation">
        <sequence resource="EMBL-CDS" id="AAZ89206"/>
    </conflict>
</comment>
<gene>
    <name evidence="2" type="primary">hda</name>
    <name type="ordered locus">SSON_2578</name>
</gene>
<reference key="1">
    <citation type="journal article" date="2005" name="Nucleic Acids Res.">
        <title>Genome dynamics and diversity of Shigella species, the etiologic agents of bacillary dysentery.</title>
        <authorList>
            <person name="Yang F."/>
            <person name="Yang J."/>
            <person name="Zhang X."/>
            <person name="Chen L."/>
            <person name="Jiang Y."/>
            <person name="Yan Y."/>
            <person name="Tang X."/>
            <person name="Wang J."/>
            <person name="Xiong Z."/>
            <person name="Dong J."/>
            <person name="Xue Y."/>
            <person name="Zhu Y."/>
            <person name="Xu X."/>
            <person name="Sun L."/>
            <person name="Chen S."/>
            <person name="Nie H."/>
            <person name="Peng J."/>
            <person name="Xu J."/>
            <person name="Wang Y."/>
            <person name="Yuan Z."/>
            <person name="Wen Y."/>
            <person name="Yao Z."/>
            <person name="Shen Y."/>
            <person name="Qiang B."/>
            <person name="Hou Y."/>
            <person name="Yu J."/>
            <person name="Jin Q."/>
        </authorList>
    </citation>
    <scope>NUCLEOTIDE SEQUENCE [LARGE SCALE GENOMIC DNA]</scope>
    <source>
        <strain>Ss046</strain>
    </source>
</reference>
<feature type="chain" id="PRO_1000065569" description="DnaA regulatory inactivator Hda">
    <location>
        <begin position="1"/>
        <end position="233"/>
    </location>
</feature>